<protein>
    <recommendedName>
        <fullName evidence="1">Phosphoribosyl-ATP pyrophosphatase</fullName>
        <shortName evidence="1">PRA-PH</shortName>
        <ecNumber evidence="1">3.6.1.31</ecNumber>
    </recommendedName>
</protein>
<organism>
    <name type="scientific">Arthrobacter sp. (strain FB24)</name>
    <dbReference type="NCBI Taxonomy" id="290399"/>
    <lineage>
        <taxon>Bacteria</taxon>
        <taxon>Bacillati</taxon>
        <taxon>Actinomycetota</taxon>
        <taxon>Actinomycetes</taxon>
        <taxon>Micrococcales</taxon>
        <taxon>Micrococcaceae</taxon>
        <taxon>Arthrobacter</taxon>
    </lineage>
</organism>
<sequence length="87" mass="9594">MKNFETLFAELSEKAATRPAGSRTVAELESGVHGIGKKVVEEAAEVWMAAEYESDEAAAEEISQLLYHLQVLMLAKGLTLEDVYKHL</sequence>
<comment type="catalytic activity">
    <reaction evidence="1">
        <text>1-(5-phospho-beta-D-ribosyl)-ATP + H2O = 1-(5-phospho-beta-D-ribosyl)-5'-AMP + diphosphate + H(+)</text>
        <dbReference type="Rhea" id="RHEA:22828"/>
        <dbReference type="ChEBI" id="CHEBI:15377"/>
        <dbReference type="ChEBI" id="CHEBI:15378"/>
        <dbReference type="ChEBI" id="CHEBI:33019"/>
        <dbReference type="ChEBI" id="CHEBI:59457"/>
        <dbReference type="ChEBI" id="CHEBI:73183"/>
        <dbReference type="EC" id="3.6.1.31"/>
    </reaction>
</comment>
<comment type="pathway">
    <text evidence="1">Amino-acid biosynthesis; L-histidine biosynthesis; L-histidine from 5-phospho-alpha-D-ribose 1-diphosphate: step 2/9.</text>
</comment>
<comment type="subcellular location">
    <subcellularLocation>
        <location evidence="1">Cytoplasm</location>
    </subcellularLocation>
</comment>
<comment type="similarity">
    <text evidence="1">Belongs to the PRA-PH family.</text>
</comment>
<comment type="sequence caution" evidence="2">
    <conflict type="erroneous initiation">
        <sequence resource="EMBL-CDS" id="ABK03073"/>
    </conflict>
</comment>
<keyword id="KW-0028">Amino-acid biosynthesis</keyword>
<keyword id="KW-0067">ATP-binding</keyword>
<keyword id="KW-0963">Cytoplasm</keyword>
<keyword id="KW-0368">Histidine biosynthesis</keyword>
<keyword id="KW-0378">Hydrolase</keyword>
<keyword id="KW-0547">Nucleotide-binding</keyword>
<keyword id="KW-1185">Reference proteome</keyword>
<accession>A0JVK3</accession>
<feature type="chain" id="PRO_0000319638" description="Phosphoribosyl-ATP pyrophosphatase">
    <location>
        <begin position="1"/>
        <end position="87"/>
    </location>
</feature>
<reference key="1">
    <citation type="journal article" date="2013" name="Stand. Genomic Sci.">
        <title>Complete genome sequence of Arthrobacter sp. strain FB24.</title>
        <authorList>
            <person name="Nakatsu C.H."/>
            <person name="Barabote R."/>
            <person name="Thompson S."/>
            <person name="Bruce D."/>
            <person name="Detter C."/>
            <person name="Brettin T."/>
            <person name="Han C."/>
            <person name="Beasley F."/>
            <person name="Chen W."/>
            <person name="Konopka A."/>
            <person name="Xie G."/>
        </authorList>
    </citation>
    <scope>NUCLEOTIDE SEQUENCE [LARGE SCALE GENOMIC DNA]</scope>
    <source>
        <strain>FB24</strain>
    </source>
</reference>
<dbReference type="EC" id="3.6.1.31" evidence="1"/>
<dbReference type="EMBL" id="CP000454">
    <property type="protein sequence ID" value="ABK03073.1"/>
    <property type="status" value="ALT_INIT"/>
    <property type="molecule type" value="Genomic_DNA"/>
</dbReference>
<dbReference type="RefSeq" id="WP_028270786.1">
    <property type="nucleotide sequence ID" value="NC_008541.1"/>
</dbReference>
<dbReference type="SMR" id="A0JVK3"/>
<dbReference type="STRING" id="290399.Arth_1679"/>
<dbReference type="KEGG" id="art:Arth_1679"/>
<dbReference type="eggNOG" id="COG0140">
    <property type="taxonomic scope" value="Bacteria"/>
</dbReference>
<dbReference type="HOGENOM" id="CLU_123337_2_0_11"/>
<dbReference type="OrthoDB" id="3212875at2"/>
<dbReference type="UniPathway" id="UPA00031">
    <property type="reaction ID" value="UER00007"/>
</dbReference>
<dbReference type="Proteomes" id="UP000000754">
    <property type="component" value="Chromosome"/>
</dbReference>
<dbReference type="GO" id="GO:0005737">
    <property type="term" value="C:cytoplasm"/>
    <property type="evidence" value="ECO:0007669"/>
    <property type="project" value="UniProtKB-SubCell"/>
</dbReference>
<dbReference type="GO" id="GO:0005524">
    <property type="term" value="F:ATP binding"/>
    <property type="evidence" value="ECO:0007669"/>
    <property type="project" value="UniProtKB-KW"/>
</dbReference>
<dbReference type="GO" id="GO:0004636">
    <property type="term" value="F:phosphoribosyl-ATP diphosphatase activity"/>
    <property type="evidence" value="ECO:0007669"/>
    <property type="project" value="UniProtKB-UniRule"/>
</dbReference>
<dbReference type="GO" id="GO:0000105">
    <property type="term" value="P:L-histidine biosynthetic process"/>
    <property type="evidence" value="ECO:0007669"/>
    <property type="project" value="UniProtKB-UniRule"/>
</dbReference>
<dbReference type="CDD" id="cd11547">
    <property type="entry name" value="NTP-PPase_HisE"/>
    <property type="match status" value="1"/>
</dbReference>
<dbReference type="Gene3D" id="1.10.287.1080">
    <property type="entry name" value="MazG-like"/>
    <property type="match status" value="1"/>
</dbReference>
<dbReference type="HAMAP" id="MF_01020">
    <property type="entry name" value="HisE"/>
    <property type="match status" value="1"/>
</dbReference>
<dbReference type="InterPro" id="IPR008179">
    <property type="entry name" value="HisE"/>
</dbReference>
<dbReference type="InterPro" id="IPR021130">
    <property type="entry name" value="PRib-ATP_PPHydrolase-like"/>
</dbReference>
<dbReference type="NCBIfam" id="TIGR03188">
    <property type="entry name" value="histidine_hisI"/>
    <property type="match status" value="1"/>
</dbReference>
<dbReference type="NCBIfam" id="NF001610">
    <property type="entry name" value="PRK00400.1-1"/>
    <property type="match status" value="1"/>
</dbReference>
<dbReference type="PANTHER" id="PTHR42945">
    <property type="entry name" value="HISTIDINE BIOSYNTHESIS BIFUNCTIONAL PROTEIN"/>
    <property type="match status" value="1"/>
</dbReference>
<dbReference type="PANTHER" id="PTHR42945:SF1">
    <property type="entry name" value="HISTIDINE BIOSYNTHESIS BIFUNCTIONAL PROTEIN HIS7"/>
    <property type="match status" value="1"/>
</dbReference>
<dbReference type="Pfam" id="PF01503">
    <property type="entry name" value="PRA-PH"/>
    <property type="match status" value="1"/>
</dbReference>
<dbReference type="SUPFAM" id="SSF101386">
    <property type="entry name" value="all-alpha NTP pyrophosphatases"/>
    <property type="match status" value="1"/>
</dbReference>
<name>HIS2_ARTS2</name>
<gene>
    <name evidence="1" type="primary">hisE</name>
    <name type="ordered locus">Arth_1679</name>
</gene>
<proteinExistence type="inferred from homology"/>
<evidence type="ECO:0000255" key="1">
    <source>
        <dbReference type="HAMAP-Rule" id="MF_01020"/>
    </source>
</evidence>
<evidence type="ECO:0000305" key="2"/>